<reference key="1">
    <citation type="journal article" date="1997" name="Yeast">
        <title>Sequence analysis of a near-subtelomeric 35.4 kb DNA segment on the right arm of chromosome VII from Saccharomyces cerevisiae carrying the MAL1 locus reveals 15 complete open reading frames, including ZUO1, BGL2 and BIO2 genes and an ABC transporter gene.</title>
        <authorList>
            <person name="Volckaert G."/>
            <person name="Voet M."/>
            <person name="Robben J."/>
        </authorList>
    </citation>
    <scope>NUCLEOTIDE SEQUENCE [GENOMIC DNA]</scope>
    <source>
        <strain>ATCC 96604 / S288c / FY1679</strain>
    </source>
</reference>
<reference key="2">
    <citation type="journal article" date="1997" name="Nature">
        <title>The nucleotide sequence of Saccharomyces cerevisiae chromosome VII.</title>
        <authorList>
            <person name="Tettelin H."/>
            <person name="Agostoni-Carbone M.L."/>
            <person name="Albermann K."/>
            <person name="Albers M."/>
            <person name="Arroyo J."/>
            <person name="Backes U."/>
            <person name="Barreiros T."/>
            <person name="Bertani I."/>
            <person name="Bjourson A.J."/>
            <person name="Brueckner M."/>
            <person name="Bruschi C.V."/>
            <person name="Carignani G."/>
            <person name="Castagnoli L."/>
            <person name="Cerdan E."/>
            <person name="Clemente M.L."/>
            <person name="Coblenz A."/>
            <person name="Coglievina M."/>
            <person name="Coissac E."/>
            <person name="Defoor E."/>
            <person name="Del Bino S."/>
            <person name="Delius H."/>
            <person name="Delneri D."/>
            <person name="de Wergifosse P."/>
            <person name="Dujon B."/>
            <person name="Durand P."/>
            <person name="Entian K.-D."/>
            <person name="Eraso P."/>
            <person name="Escribano V."/>
            <person name="Fabiani L."/>
            <person name="Fartmann B."/>
            <person name="Feroli F."/>
            <person name="Feuermann M."/>
            <person name="Frontali L."/>
            <person name="Garcia-Gonzalez M."/>
            <person name="Garcia-Saez M.I."/>
            <person name="Goffeau A."/>
            <person name="Guerreiro P."/>
            <person name="Hani J."/>
            <person name="Hansen M."/>
            <person name="Hebling U."/>
            <person name="Hernandez K."/>
            <person name="Heumann K."/>
            <person name="Hilger F."/>
            <person name="Hofmann B."/>
            <person name="Indge K.J."/>
            <person name="James C.M."/>
            <person name="Klima R."/>
            <person name="Koetter P."/>
            <person name="Kramer B."/>
            <person name="Kramer W."/>
            <person name="Lauquin G."/>
            <person name="Leuther H."/>
            <person name="Louis E.J."/>
            <person name="Maillier E."/>
            <person name="Marconi A."/>
            <person name="Martegani E."/>
            <person name="Mazon M.J."/>
            <person name="Mazzoni C."/>
            <person name="McReynolds A.D.K."/>
            <person name="Melchioretto P."/>
            <person name="Mewes H.-W."/>
            <person name="Minenkova O."/>
            <person name="Mueller-Auer S."/>
            <person name="Nawrocki A."/>
            <person name="Netter P."/>
            <person name="Neu R."/>
            <person name="Nombela C."/>
            <person name="Oliver S.G."/>
            <person name="Panzeri L."/>
            <person name="Paoluzi S."/>
            <person name="Plevani P."/>
            <person name="Portetelle D."/>
            <person name="Portillo F."/>
            <person name="Potier S."/>
            <person name="Purnelle B."/>
            <person name="Rieger M."/>
            <person name="Riles L."/>
            <person name="Rinaldi T."/>
            <person name="Robben J."/>
            <person name="Rodrigues-Pousada C."/>
            <person name="Rodriguez-Belmonte E."/>
            <person name="Rodriguez-Torres A.M."/>
            <person name="Rose M."/>
            <person name="Ruzzi M."/>
            <person name="Saliola M."/>
            <person name="Sanchez-Perez M."/>
            <person name="Schaefer B."/>
            <person name="Schaefer M."/>
            <person name="Scharfe M."/>
            <person name="Schmidheini T."/>
            <person name="Schreer A."/>
            <person name="Skala J."/>
            <person name="Souciet J.-L."/>
            <person name="Steensma H.Y."/>
            <person name="Talla E."/>
            <person name="Thierry A."/>
            <person name="Vandenbol M."/>
            <person name="van der Aart Q.J.M."/>
            <person name="Van Dyck L."/>
            <person name="Vanoni M."/>
            <person name="Verhasselt P."/>
            <person name="Voet M."/>
            <person name="Volckaert G."/>
            <person name="Wambutt R."/>
            <person name="Watson M.D."/>
            <person name="Weber N."/>
            <person name="Wedler E."/>
            <person name="Wedler H."/>
            <person name="Wipfli P."/>
            <person name="Wolf K."/>
            <person name="Wright L.F."/>
            <person name="Zaccaria P."/>
            <person name="Zimmermann M."/>
            <person name="Zollner A."/>
            <person name="Kleine K."/>
        </authorList>
    </citation>
    <scope>NUCLEOTIDE SEQUENCE [LARGE SCALE GENOMIC DNA]</scope>
    <source>
        <strain>ATCC 204508 / S288c</strain>
    </source>
</reference>
<reference key="3">
    <citation type="journal article" date="2014" name="G3 (Bethesda)">
        <title>The reference genome sequence of Saccharomyces cerevisiae: Then and now.</title>
        <authorList>
            <person name="Engel S.R."/>
            <person name="Dietrich F.S."/>
            <person name="Fisk D.G."/>
            <person name="Binkley G."/>
            <person name="Balakrishnan R."/>
            <person name="Costanzo M.C."/>
            <person name="Dwight S.S."/>
            <person name="Hitz B.C."/>
            <person name="Karra K."/>
            <person name="Nash R.S."/>
            <person name="Weng S."/>
            <person name="Wong E.D."/>
            <person name="Lloyd P."/>
            <person name="Skrzypek M.S."/>
            <person name="Miyasato S.R."/>
            <person name="Simison M."/>
            <person name="Cherry J.M."/>
        </authorList>
    </citation>
    <scope>GENOME REANNOTATION</scope>
    <source>
        <strain>ATCC 204508 / S288c</strain>
    </source>
</reference>
<evidence type="ECO:0000255" key="1"/>
<evidence type="ECO:0000255" key="2">
    <source>
        <dbReference type="PROSITE-ProRule" id="PRU00227"/>
    </source>
</evidence>
<evidence type="ECO:0000305" key="3"/>
<name>MAL13_YEAST</name>
<sequence length="473" mass="54325">MTLTKQTCAKQACDCCRIRRVKCDGKRPCSSCLQNSLDCTYLQPSRKRGPKSIRLRSLKRIAEVQRESGPNTIATAPVIYKRVPKKLIDQCLRLYHDNLYVIWPLLSYDDLHKLLEEKYNDNYVYWFLTALSAATLSDLQTEIKSEEEVTFTGKQLSNLCISSCQQFDDLDNSNIFNIMTYYCLHRSFAQISNARTSYRLCCEAVGLITVAGLHREETYGSLTFEEQQLRRKLYYLLLMTERYYAIYLHCATSLDATIAPPQLELVTDPQLSMDSFLEMIRVFTVPGKCFFDALAADSTDASCTEESLKKIWNELHTTSSEIEPWSNGYIDISFSRHWIRILAWKLAYQMRGSNFSLNANNGQIPIEIARDMLIDTYLTPENLYDVHGPGVPVKTLEIATALVDIVGQYDHNMKLEAWNVLHDVCKFAFSLNHYNNDMLKRFSTKCQNALITLPISKPLQLDGYPKDNEDIDP</sequence>
<accession>P53338</accession>
<accession>D6VV65</accession>
<organism>
    <name type="scientific">Saccharomyces cerevisiae (strain ATCC 204508 / S288c)</name>
    <name type="common">Baker's yeast</name>
    <dbReference type="NCBI Taxonomy" id="559292"/>
    <lineage>
        <taxon>Eukaryota</taxon>
        <taxon>Fungi</taxon>
        <taxon>Dikarya</taxon>
        <taxon>Ascomycota</taxon>
        <taxon>Saccharomycotina</taxon>
        <taxon>Saccharomycetes</taxon>
        <taxon>Saccharomycetales</taxon>
        <taxon>Saccharomycetaceae</taxon>
        <taxon>Saccharomyces</taxon>
    </lineage>
</organism>
<dbReference type="EMBL" id="Z73073">
    <property type="protein sequence ID" value="CAA97320.1"/>
    <property type="molecule type" value="Genomic_DNA"/>
</dbReference>
<dbReference type="EMBL" id="BK006941">
    <property type="protein sequence ID" value="DAA08376.1"/>
    <property type="molecule type" value="Genomic_DNA"/>
</dbReference>
<dbReference type="PIR" id="S64623">
    <property type="entry name" value="S64623"/>
</dbReference>
<dbReference type="RefSeq" id="NP_011804.1">
    <property type="nucleotide sequence ID" value="NM_001181417.1"/>
</dbReference>
<dbReference type="SMR" id="P53338"/>
<dbReference type="BioGRID" id="33538">
    <property type="interactions" value="44"/>
</dbReference>
<dbReference type="FunCoup" id="P53338">
    <property type="interactions" value="137"/>
</dbReference>
<dbReference type="IntAct" id="P53338">
    <property type="interactions" value="1"/>
</dbReference>
<dbReference type="MINT" id="P53338"/>
<dbReference type="STRING" id="4932.YGR288W"/>
<dbReference type="PaxDb" id="4932-YGR288W"/>
<dbReference type="PeptideAtlas" id="P53338"/>
<dbReference type="EnsemblFungi" id="YGR288W_mRNA">
    <property type="protein sequence ID" value="YGR288W"/>
    <property type="gene ID" value="YGR288W"/>
</dbReference>
<dbReference type="GeneID" id="853205"/>
<dbReference type="KEGG" id="sce:YGR288W"/>
<dbReference type="AGR" id="SGD:S000003520"/>
<dbReference type="SGD" id="S000003520">
    <property type="gene designation" value="MAL13"/>
</dbReference>
<dbReference type="VEuPathDB" id="FungiDB:YGR288W"/>
<dbReference type="eggNOG" id="ENOG502S2FW">
    <property type="taxonomic scope" value="Eukaryota"/>
</dbReference>
<dbReference type="GeneTree" id="ENSGT00940000176316"/>
<dbReference type="HOGENOM" id="CLU_046324_0_0_1"/>
<dbReference type="InParanoid" id="P53338"/>
<dbReference type="OMA" id="KLFEVAM"/>
<dbReference type="OrthoDB" id="2740448at2759"/>
<dbReference type="BioCyc" id="YEAST:G3O-30948-MONOMER"/>
<dbReference type="BioGRID-ORCS" id="853205">
    <property type="hits" value="0 hits in 10 CRISPR screens"/>
</dbReference>
<dbReference type="PRO" id="PR:P53338"/>
<dbReference type="Proteomes" id="UP000002311">
    <property type="component" value="Chromosome VII"/>
</dbReference>
<dbReference type="RNAct" id="P53338">
    <property type="molecule type" value="protein"/>
</dbReference>
<dbReference type="GO" id="GO:0005634">
    <property type="term" value="C:nucleus"/>
    <property type="evidence" value="ECO:0007669"/>
    <property type="project" value="UniProtKB-SubCell"/>
</dbReference>
<dbReference type="GO" id="GO:0003677">
    <property type="term" value="F:DNA binding"/>
    <property type="evidence" value="ECO:0007669"/>
    <property type="project" value="UniProtKB-KW"/>
</dbReference>
<dbReference type="GO" id="GO:0000981">
    <property type="term" value="F:DNA-binding transcription factor activity, RNA polymerase II-specific"/>
    <property type="evidence" value="ECO:0007669"/>
    <property type="project" value="InterPro"/>
</dbReference>
<dbReference type="GO" id="GO:0008270">
    <property type="term" value="F:zinc ion binding"/>
    <property type="evidence" value="ECO:0007669"/>
    <property type="project" value="InterPro"/>
</dbReference>
<dbReference type="GO" id="GO:0005975">
    <property type="term" value="P:carbohydrate metabolic process"/>
    <property type="evidence" value="ECO:0000315"/>
    <property type="project" value="SGD"/>
</dbReference>
<dbReference type="GO" id="GO:0006351">
    <property type="term" value="P:DNA-templated transcription"/>
    <property type="evidence" value="ECO:0007669"/>
    <property type="project" value="InterPro"/>
</dbReference>
<dbReference type="GO" id="GO:0000023">
    <property type="term" value="P:maltose metabolic process"/>
    <property type="evidence" value="ECO:0007669"/>
    <property type="project" value="UniProtKB-KW"/>
</dbReference>
<dbReference type="CDD" id="cd12148">
    <property type="entry name" value="fungal_TF_MHR"/>
    <property type="match status" value="1"/>
</dbReference>
<dbReference type="CDD" id="cd00067">
    <property type="entry name" value="GAL4"/>
    <property type="match status" value="1"/>
</dbReference>
<dbReference type="FunFam" id="4.10.240.10:FF:000020">
    <property type="entry name" value="Maltose activator protein"/>
    <property type="match status" value="1"/>
</dbReference>
<dbReference type="Gene3D" id="4.10.240.10">
    <property type="entry name" value="Zn(2)-C6 fungal-type DNA-binding domain"/>
    <property type="match status" value="1"/>
</dbReference>
<dbReference type="InterPro" id="IPR050797">
    <property type="entry name" value="Carb_Metab_Trans_Reg"/>
</dbReference>
<dbReference type="InterPro" id="IPR020448">
    <property type="entry name" value="Maltose_ferment_reg_DNA-bd"/>
</dbReference>
<dbReference type="InterPro" id="IPR007219">
    <property type="entry name" value="Transcription_factor_dom_fun"/>
</dbReference>
<dbReference type="InterPro" id="IPR036864">
    <property type="entry name" value="Zn2-C6_fun-type_DNA-bd_sf"/>
</dbReference>
<dbReference type="InterPro" id="IPR001138">
    <property type="entry name" value="Zn2Cys6_DnaBD"/>
</dbReference>
<dbReference type="PANTHER" id="PTHR31668">
    <property type="entry name" value="GLUCOSE TRANSPORT TRANSCRIPTION REGULATOR RGT1-RELATED-RELATED"/>
    <property type="match status" value="1"/>
</dbReference>
<dbReference type="PANTHER" id="PTHR31668:SF18">
    <property type="entry name" value="MALTOSE FERMENTATION REGULATORY PROTEIN MAL13-RELATED"/>
    <property type="match status" value="1"/>
</dbReference>
<dbReference type="Pfam" id="PF04082">
    <property type="entry name" value="Fungal_trans"/>
    <property type="match status" value="1"/>
</dbReference>
<dbReference type="Pfam" id="PF00172">
    <property type="entry name" value="Zn_clus"/>
    <property type="match status" value="1"/>
</dbReference>
<dbReference type="PRINTS" id="PR00054">
    <property type="entry name" value="FUNGALZNCYS"/>
</dbReference>
<dbReference type="SMART" id="SM00066">
    <property type="entry name" value="GAL4"/>
    <property type="match status" value="1"/>
</dbReference>
<dbReference type="SUPFAM" id="SSF57701">
    <property type="entry name" value="Zn2/Cys6 DNA-binding domain"/>
    <property type="match status" value="1"/>
</dbReference>
<dbReference type="PROSITE" id="PS00463">
    <property type="entry name" value="ZN2_CY6_FUNGAL_1"/>
    <property type="match status" value="1"/>
</dbReference>
<dbReference type="PROSITE" id="PS50048">
    <property type="entry name" value="ZN2_CY6_FUNGAL_2"/>
    <property type="match status" value="1"/>
</dbReference>
<protein>
    <recommendedName>
        <fullName>Maltose fermentation regulatory protein MAL13</fullName>
    </recommendedName>
</protein>
<proteinExistence type="inferred from homology"/>
<comment type="function">
    <text>Regulates the coordinate transcription of structural MAL1S (maltase) and AGT1 (maltose permease) genes.</text>
</comment>
<comment type="subcellular location">
    <subcellularLocation>
        <location>Nucleus</location>
    </subcellularLocation>
</comment>
<comment type="similarity">
    <text evidence="3">Belongs to the MAL13 family.</text>
</comment>
<feature type="chain" id="PRO_0000114956" description="Maltose fermentation regulatory protein MAL13">
    <location>
        <begin position="1"/>
        <end position="473"/>
    </location>
</feature>
<feature type="DNA-binding region" description="Zn(2)-C6 fungal-type" evidence="2">
    <location>
        <begin position="13"/>
        <end position="39"/>
    </location>
</feature>
<feature type="short sequence motif" description="Nuclear localization signal" evidence="1">
    <location>
        <begin position="46"/>
        <end position="54"/>
    </location>
</feature>
<gene>
    <name type="primary">MAL13</name>
    <name type="synonym">MAL1R</name>
    <name type="ordered locus">YGR288W</name>
    <name type="ORF">G9591</name>
</gene>
<keyword id="KW-0010">Activator</keyword>
<keyword id="KW-0238">DNA-binding</keyword>
<keyword id="KW-0462">Maltose metabolism</keyword>
<keyword id="KW-0479">Metal-binding</keyword>
<keyword id="KW-0539">Nucleus</keyword>
<keyword id="KW-1185">Reference proteome</keyword>
<keyword id="KW-0804">Transcription</keyword>
<keyword id="KW-0805">Transcription regulation</keyword>
<keyword id="KW-0862">Zinc</keyword>